<sequence>MTDRRPTIMDKAKKQWEVMALNSLLILFTNFAIFLSMPPQTEIFEDIICSKMHSESALHPQGEDDGCRGALVQSELARINGWKTTFEALPRMLLSEAWTRVVCIYSDVLPLSLVWLSGLLRSVGGGEPVIDSIMCVMVMDVFEESDRAVALLRLHSVFIVAKIFAAPASAALVALTSAWTPFLISLAMLFVAQALSFLLPETLGYVEQKEPDDSRAHKMAGKKGNLNQRFALAARLIVQNRNMAPIIIVNLVASITKSSNHFLLQYSSTKYEWSYSQSNLVLVIREASSLLTYLVLMPAASKAIRRVSSKSVTAQDKRLCQGSGLLNVFGFFSIALAGTPVVYVLALAFLSLGSGFDTAMSGFATSLVQPDQIASLHSTAATAKSLGGLVAGPLFARLMQVGFELGSGWLGIPYIAAGLFFITVLVAVCSIRIQSRSLDEDGQPLLQTDV</sequence>
<proteinExistence type="inferred from homology"/>
<protein>
    <recommendedName>
        <fullName evidence="3">MFS-type transporter avaK</fullName>
    </recommendedName>
    <alternativeName>
        <fullName evidence="3">Ava biosynthesis cluster protein K</fullName>
    </alternativeName>
</protein>
<name>AVAK_ASPVE</name>
<evidence type="ECO:0000255" key="1"/>
<evidence type="ECO:0000269" key="2">
    <source>
    </source>
</evidence>
<evidence type="ECO:0000303" key="3">
    <source>
    </source>
</evidence>
<evidence type="ECO:0000305" key="4"/>
<evidence type="ECO:0000305" key="5">
    <source>
    </source>
</evidence>
<keyword id="KW-0472">Membrane</keyword>
<keyword id="KW-0812">Transmembrane</keyword>
<keyword id="KW-1133">Transmembrane helix</keyword>
<keyword id="KW-0813">Transport</keyword>
<accession>P9WEL2</accession>
<dbReference type="EMBL" id="OP596311">
    <property type="protein sequence ID" value="UZP48223.1"/>
    <property type="molecule type" value="Genomic_DNA"/>
</dbReference>
<dbReference type="SMR" id="P9WEL2"/>
<dbReference type="GO" id="GO:0016020">
    <property type="term" value="C:membrane"/>
    <property type="evidence" value="ECO:0007669"/>
    <property type="project" value="UniProtKB-SubCell"/>
</dbReference>
<dbReference type="GO" id="GO:0022857">
    <property type="term" value="F:transmembrane transporter activity"/>
    <property type="evidence" value="ECO:0007669"/>
    <property type="project" value="InterPro"/>
</dbReference>
<dbReference type="CDD" id="cd06174">
    <property type="entry name" value="MFS"/>
    <property type="match status" value="1"/>
</dbReference>
<dbReference type="Gene3D" id="1.20.1250.20">
    <property type="entry name" value="MFS general substrate transporter like domains"/>
    <property type="match status" value="1"/>
</dbReference>
<dbReference type="InterPro" id="IPR011701">
    <property type="entry name" value="MFS"/>
</dbReference>
<dbReference type="InterPro" id="IPR036259">
    <property type="entry name" value="MFS_trans_sf"/>
</dbReference>
<dbReference type="PANTHER" id="PTHR23507:SF1">
    <property type="entry name" value="FI18259P1-RELATED"/>
    <property type="match status" value="1"/>
</dbReference>
<dbReference type="PANTHER" id="PTHR23507">
    <property type="entry name" value="ZGC:174356"/>
    <property type="match status" value="1"/>
</dbReference>
<dbReference type="Pfam" id="PF07690">
    <property type="entry name" value="MFS_1"/>
    <property type="match status" value="1"/>
</dbReference>
<dbReference type="SUPFAM" id="SSF103473">
    <property type="entry name" value="MFS general substrate transporter"/>
    <property type="match status" value="1"/>
</dbReference>
<gene>
    <name evidence="3" type="primary">avaK</name>
</gene>
<organism>
    <name type="scientific">Aspergillus versicolor</name>
    <dbReference type="NCBI Taxonomy" id="46472"/>
    <lineage>
        <taxon>Eukaryota</taxon>
        <taxon>Fungi</taxon>
        <taxon>Dikarya</taxon>
        <taxon>Ascomycota</taxon>
        <taxon>Pezizomycotina</taxon>
        <taxon>Eurotiomycetes</taxon>
        <taxon>Eurotiomycetidae</taxon>
        <taxon>Eurotiales</taxon>
        <taxon>Aspergillaceae</taxon>
        <taxon>Aspergillus</taxon>
        <taxon>Aspergillus subgen. Nidulantes</taxon>
    </lineage>
</organism>
<comment type="function">
    <text evidence="2">MFS-type transporter; part of the cluster that mediates the biosynthesis of a highly modified cyclo-arginine-tryptophan dipeptide (cRW).</text>
</comment>
<comment type="pathway">
    <text evidence="5">Secondary metabolite biosynthesis.</text>
</comment>
<comment type="subcellular location">
    <subcellularLocation>
        <location evidence="1">Membrane</location>
        <topology evidence="1">Multi-pass membrane protein</topology>
    </subcellularLocation>
</comment>
<comment type="similarity">
    <text evidence="4">Belongs to the major facilitator superfamily.</text>
</comment>
<feature type="chain" id="PRO_0000461019" description="MFS-type transporter avaK">
    <location>
        <begin position="1"/>
        <end position="450"/>
    </location>
</feature>
<feature type="transmembrane region" description="Helical" evidence="1">
    <location>
        <begin position="18"/>
        <end position="38"/>
    </location>
</feature>
<feature type="transmembrane region" description="Helical" evidence="1">
    <location>
        <begin position="100"/>
        <end position="120"/>
    </location>
</feature>
<feature type="transmembrane region" description="Helical" evidence="1">
    <location>
        <begin position="148"/>
        <end position="168"/>
    </location>
</feature>
<feature type="transmembrane region" description="Helical" evidence="1">
    <location>
        <begin position="171"/>
        <end position="191"/>
    </location>
</feature>
<feature type="transmembrane region" description="Helical" evidence="1">
    <location>
        <begin position="244"/>
        <end position="264"/>
    </location>
</feature>
<feature type="transmembrane region" description="Helical" evidence="1">
    <location>
        <begin position="280"/>
        <end position="300"/>
    </location>
</feature>
<feature type="transmembrane region" description="Helical" evidence="1">
    <location>
        <begin position="329"/>
        <end position="349"/>
    </location>
</feature>
<feature type="transmembrane region" description="Helical" evidence="1">
    <location>
        <begin position="408"/>
        <end position="428"/>
    </location>
</feature>
<reference key="1">
    <citation type="journal article" date="2023" name="Nat. Chem. Biol.">
        <title>Genome mining for unknown-unknown natural products.</title>
        <authorList>
            <person name="Yee D.A."/>
            <person name="Niwa K."/>
            <person name="Perlatti B."/>
            <person name="Chen M."/>
            <person name="Li Y."/>
            <person name="Tang Y."/>
        </authorList>
    </citation>
    <scope>NUCLEOTIDE SEQUENCE [GENOMIC DNA]</scope>
    <scope>FUNCTION</scope>
    <source>
        <strain>dI-29</strain>
    </source>
</reference>